<protein>
    <recommendedName>
        <fullName evidence="1">Cobyric acid synthase</fullName>
    </recommendedName>
</protein>
<name>COBQ_BRUC2</name>
<comment type="function">
    <text evidence="1">Catalyzes amidations at positions B, D, E, and G on adenosylcobyrinic A,C-diamide. NH(2) groups are provided by glutamine, and one molecule of ATP is hydrogenolyzed for each amidation.</text>
</comment>
<comment type="pathway">
    <text evidence="1">Cofactor biosynthesis; adenosylcobalamin biosynthesis.</text>
</comment>
<comment type="similarity">
    <text evidence="1">Belongs to the CobB/CobQ family. CobQ subfamily.</text>
</comment>
<evidence type="ECO:0000255" key="1">
    <source>
        <dbReference type="HAMAP-Rule" id="MF_00028"/>
    </source>
</evidence>
<proteinExistence type="inferred from homology"/>
<feature type="chain" id="PRO_1000074395" description="Cobyric acid synthase">
    <location>
        <begin position="1"/>
        <end position="483"/>
    </location>
</feature>
<feature type="domain" description="GATase cobBQ-type" evidence="1">
    <location>
        <begin position="251"/>
        <end position="438"/>
    </location>
</feature>
<feature type="active site" description="Nucleophile" evidence="1">
    <location>
        <position position="333"/>
    </location>
</feature>
<feature type="active site" evidence="1">
    <location>
        <position position="430"/>
    </location>
</feature>
<accession>A9M5X3</accession>
<gene>
    <name evidence="1" type="primary">cobQ</name>
    <name type="ordered locus">BCAN_A1335</name>
</gene>
<organism>
    <name type="scientific">Brucella canis (strain ATCC 23365 / NCTC 10854 / RM-666)</name>
    <dbReference type="NCBI Taxonomy" id="483179"/>
    <lineage>
        <taxon>Bacteria</taxon>
        <taxon>Pseudomonadati</taxon>
        <taxon>Pseudomonadota</taxon>
        <taxon>Alphaproteobacteria</taxon>
        <taxon>Hyphomicrobiales</taxon>
        <taxon>Brucellaceae</taxon>
        <taxon>Brucella/Ochrobactrum group</taxon>
        <taxon>Brucella</taxon>
    </lineage>
</organism>
<sequence>MARAIMFQGTGSDVGKSVLVAGLCRVARNRGLKVRPFKPQNMSNNAAVSDDGGEIGRAQWLQALACGVPSSVHMNPVLLKPQTDMGSQLIVQGQVRGEARGRYYQELKPQLMAAVMESFAKVGDGADLVLVEGAGSPAEINLRAGDIANMGFATHADVPVVLVGDIDRGGVIASLVGTHTILPQEDRAMVRGFLINKFRGDISLFDDGLAAITRFTGWRSFGVVPWLKAVSRLPAEDSVILERAVRGDKKALIVAVPMLPRIANFDDLDPLKAEPAVEVVMVPPGSSLPADAGLVVLPGTKSTIADLLALRENGWDRELVAHVKRGGHVLGICGGFQMLGRRISDPAGIEGNVRDIEGLGLLDIETMMEPEKVVRNVEAVSLLHDEPLEGYEIHIGRTSGPDMARPFARIGDHDDGAVSPDGRIMGTYLHGVFSADRFRHHFLRALGVEGGQMNYRESVEEALDELAEGLEASLDIDGLFALA</sequence>
<reference key="1">
    <citation type="submission" date="2007-10" db="EMBL/GenBank/DDBJ databases">
        <title>Brucella canis ATCC 23365 whole genome shotgun sequencing project.</title>
        <authorList>
            <person name="Setubal J.C."/>
            <person name="Bowns C."/>
            <person name="Boyle S."/>
            <person name="Crasta O.R."/>
            <person name="Czar M.J."/>
            <person name="Dharmanolla C."/>
            <person name="Gillespie J.J."/>
            <person name="Kenyon R.W."/>
            <person name="Lu J."/>
            <person name="Mane S."/>
            <person name="Mohapatra S."/>
            <person name="Nagrani S."/>
            <person name="Purkayastha A."/>
            <person name="Rajasimha H.K."/>
            <person name="Shallom J.M."/>
            <person name="Shallom S."/>
            <person name="Shukla M."/>
            <person name="Snyder E.E."/>
            <person name="Sobral B.W."/>
            <person name="Wattam A.R."/>
            <person name="Will R."/>
            <person name="Williams K."/>
            <person name="Yoo H."/>
            <person name="Bruce D."/>
            <person name="Detter C."/>
            <person name="Munk C."/>
            <person name="Brettin T.S."/>
        </authorList>
    </citation>
    <scope>NUCLEOTIDE SEQUENCE [LARGE SCALE GENOMIC DNA]</scope>
    <source>
        <strain>ATCC 23365 / NCTC 10854 / RM-666</strain>
    </source>
</reference>
<keyword id="KW-0169">Cobalamin biosynthesis</keyword>
<keyword id="KW-0315">Glutamine amidotransferase</keyword>
<keyword id="KW-1185">Reference proteome</keyword>
<dbReference type="EMBL" id="CP000872">
    <property type="protein sequence ID" value="ABX62378.1"/>
    <property type="molecule type" value="Genomic_DNA"/>
</dbReference>
<dbReference type="RefSeq" id="WP_004690938.1">
    <property type="nucleotide sequence ID" value="NC_010103.1"/>
</dbReference>
<dbReference type="SMR" id="A9M5X3"/>
<dbReference type="GeneID" id="55590980"/>
<dbReference type="KEGG" id="bcs:BCAN_A1335"/>
<dbReference type="HOGENOM" id="CLU_019250_2_0_5"/>
<dbReference type="PhylomeDB" id="A9M5X3"/>
<dbReference type="UniPathway" id="UPA00148"/>
<dbReference type="Proteomes" id="UP000001385">
    <property type="component" value="Chromosome I"/>
</dbReference>
<dbReference type="GO" id="GO:0015420">
    <property type="term" value="F:ABC-type vitamin B12 transporter activity"/>
    <property type="evidence" value="ECO:0007669"/>
    <property type="project" value="UniProtKB-UniRule"/>
</dbReference>
<dbReference type="GO" id="GO:0003824">
    <property type="term" value="F:catalytic activity"/>
    <property type="evidence" value="ECO:0007669"/>
    <property type="project" value="InterPro"/>
</dbReference>
<dbReference type="GO" id="GO:0009236">
    <property type="term" value="P:cobalamin biosynthetic process"/>
    <property type="evidence" value="ECO:0007669"/>
    <property type="project" value="UniProtKB-UniRule"/>
</dbReference>
<dbReference type="CDD" id="cd05389">
    <property type="entry name" value="CobQ_N"/>
    <property type="match status" value="1"/>
</dbReference>
<dbReference type="CDD" id="cd01750">
    <property type="entry name" value="GATase1_CobQ"/>
    <property type="match status" value="1"/>
</dbReference>
<dbReference type="Gene3D" id="3.40.50.880">
    <property type="match status" value="1"/>
</dbReference>
<dbReference type="Gene3D" id="3.40.50.300">
    <property type="entry name" value="P-loop containing nucleotide triphosphate hydrolases"/>
    <property type="match status" value="1"/>
</dbReference>
<dbReference type="HAMAP" id="MF_00028">
    <property type="entry name" value="CobQ"/>
    <property type="match status" value="1"/>
</dbReference>
<dbReference type="InterPro" id="IPR029062">
    <property type="entry name" value="Class_I_gatase-like"/>
</dbReference>
<dbReference type="InterPro" id="IPR002586">
    <property type="entry name" value="CobQ/CobB/MinD/ParA_Nub-bd_dom"/>
</dbReference>
<dbReference type="InterPro" id="IPR033949">
    <property type="entry name" value="CobQ_GATase1"/>
</dbReference>
<dbReference type="InterPro" id="IPR047045">
    <property type="entry name" value="CobQ_N"/>
</dbReference>
<dbReference type="InterPro" id="IPR004459">
    <property type="entry name" value="CobQ_synth"/>
</dbReference>
<dbReference type="InterPro" id="IPR011698">
    <property type="entry name" value="GATase_3"/>
</dbReference>
<dbReference type="InterPro" id="IPR027417">
    <property type="entry name" value="P-loop_NTPase"/>
</dbReference>
<dbReference type="NCBIfam" id="TIGR00313">
    <property type="entry name" value="cobQ"/>
    <property type="match status" value="1"/>
</dbReference>
<dbReference type="NCBIfam" id="NF001989">
    <property type="entry name" value="PRK00784.1"/>
    <property type="match status" value="1"/>
</dbReference>
<dbReference type="PANTHER" id="PTHR21343:SF1">
    <property type="entry name" value="COBYRIC ACID SYNTHASE"/>
    <property type="match status" value="1"/>
</dbReference>
<dbReference type="PANTHER" id="PTHR21343">
    <property type="entry name" value="DETHIOBIOTIN SYNTHETASE"/>
    <property type="match status" value="1"/>
</dbReference>
<dbReference type="Pfam" id="PF01656">
    <property type="entry name" value="CbiA"/>
    <property type="match status" value="1"/>
</dbReference>
<dbReference type="Pfam" id="PF07685">
    <property type="entry name" value="GATase_3"/>
    <property type="match status" value="1"/>
</dbReference>
<dbReference type="SUPFAM" id="SSF52317">
    <property type="entry name" value="Class I glutamine amidotransferase-like"/>
    <property type="match status" value="1"/>
</dbReference>
<dbReference type="SUPFAM" id="SSF52540">
    <property type="entry name" value="P-loop containing nucleoside triphosphate hydrolases"/>
    <property type="match status" value="1"/>
</dbReference>
<dbReference type="PROSITE" id="PS51274">
    <property type="entry name" value="GATASE_COBBQ"/>
    <property type="match status" value="1"/>
</dbReference>